<gene>
    <name type="primary">Or69a</name>
    <name type="synonym">Or69b</name>
    <name type="ORF">CG32116</name>
</gene>
<accession>P82985</accession>
<name>OR69B_DROME</name>
<protein>
    <recommendedName>
        <fullName>Putative odorant receptor 69a, isoform B</fullName>
    </recommendedName>
</protein>
<comment type="function">
    <text evidence="1">Odorant receptor which mediates acceptance or avoidance behavior, depending on its substrates. The odorant receptor repertoire encodes a large collection of odor stimuli that vary widely in identity, intensity, and duration. May form a complex with Orco to form odorant-sensing units, providing sensitive and prolonged odorant signaling and calcium permeability (By similarity).</text>
</comment>
<comment type="subunit">
    <text evidence="1">Interacts with Orco. Complexes exist early in the endomembrane system in olfactory sensory neurons (OSNs), coupling these complexes to the conserved ciliary trafficking pathway (By similarity).</text>
</comment>
<comment type="subcellular location">
    <subcellularLocation>
        <location evidence="1">Cell membrane</location>
        <topology evidence="1">Multi-pass membrane protein</topology>
    </subcellularLocation>
</comment>
<comment type="alternative products">
    <event type="alternative splicing"/>
    <isoform>
        <id>P82985-1</id>
        <name>B</name>
        <sequence type="displayed"/>
    </isoform>
    <isoform>
        <id>Q9VU27-1</id>
        <name>A</name>
        <sequence type="external"/>
    </isoform>
</comment>
<comment type="tissue specificity">
    <text evidence="3">Expressed in olfactory sensory neurons in the antenna.</text>
</comment>
<comment type="miscellaneous">
    <text>The atypical heteromeric and topological design of the odorant receptors appears to be an insect-specific solution for odor recognition, making the OR/Orco complex an attractive target for the development of highly selective insect repellents to disrupt olfactory-mediated host-seeking behaviors of insect disease vectors. Odor-evoked OR currents are independent of known G-protein-coupled second messenger pathways.</text>
</comment>
<comment type="similarity">
    <text evidence="4">Belongs to the insect chemoreceptor superfamily. Heteromeric odorant receptor channel (TC 1.A.69) family. Or49a subfamily.</text>
</comment>
<organism>
    <name type="scientific">Drosophila melanogaster</name>
    <name type="common">Fruit fly</name>
    <dbReference type="NCBI Taxonomy" id="7227"/>
    <lineage>
        <taxon>Eukaryota</taxon>
        <taxon>Metazoa</taxon>
        <taxon>Ecdysozoa</taxon>
        <taxon>Arthropoda</taxon>
        <taxon>Hexapoda</taxon>
        <taxon>Insecta</taxon>
        <taxon>Pterygota</taxon>
        <taxon>Neoptera</taxon>
        <taxon>Endopterygota</taxon>
        <taxon>Diptera</taxon>
        <taxon>Brachycera</taxon>
        <taxon>Muscomorpha</taxon>
        <taxon>Ephydroidea</taxon>
        <taxon>Drosophilidae</taxon>
        <taxon>Drosophila</taxon>
        <taxon>Sophophora</taxon>
    </lineage>
</organism>
<dbReference type="EMBL" id="AE014296">
    <property type="protein sequence ID" value="AAN11842.1"/>
    <property type="molecule type" value="Genomic_DNA"/>
</dbReference>
<dbReference type="RefSeq" id="NP_996069.1">
    <molecule id="P82985-1"/>
    <property type="nucleotide sequence ID" value="NM_206347.1"/>
</dbReference>
<dbReference type="SMR" id="P82985"/>
<dbReference type="BioGRID" id="77813">
    <property type="interactions" value="1"/>
</dbReference>
<dbReference type="FunCoup" id="P82985">
    <property type="interactions" value="17"/>
</dbReference>
<dbReference type="IntAct" id="P82985">
    <property type="interactions" value="1"/>
</dbReference>
<dbReference type="EnsemblMetazoa" id="FBtr0075902">
    <molecule id="P82985-1"/>
    <property type="protein sequence ID" value="FBpp0089413"/>
    <property type="gene ID" value="FBgn0041622"/>
</dbReference>
<dbReference type="GeneID" id="2768964"/>
<dbReference type="KEGG" id="dme:Dmel_CG33264"/>
<dbReference type="AGR" id="FB:FBgn0041622"/>
<dbReference type="CTD" id="2768964"/>
<dbReference type="FlyBase" id="FBgn0041622">
    <property type="gene designation" value="Or69a"/>
</dbReference>
<dbReference type="VEuPathDB" id="VectorBase:FBgn0041622"/>
<dbReference type="GeneTree" id="ENSGT00560000077544"/>
<dbReference type="InParanoid" id="P82985"/>
<dbReference type="OrthoDB" id="6617147at2759"/>
<dbReference type="PhylomeDB" id="P82985"/>
<dbReference type="SignaLink" id="P82985"/>
<dbReference type="BioGRID-ORCS" id="2768964">
    <property type="hits" value="0 hits in 1 CRISPR screen"/>
</dbReference>
<dbReference type="GenomeRNAi" id="2768964"/>
<dbReference type="Proteomes" id="UP000000803">
    <property type="component" value="Chromosome 3L"/>
</dbReference>
<dbReference type="Bgee" id="FBgn0041622">
    <property type="expression patterns" value="Expressed in adult olfactory receptor neuron Or69a (Drosophila)"/>
</dbReference>
<dbReference type="ExpressionAtlas" id="P82985">
    <property type="expression patterns" value="baseline and differential"/>
</dbReference>
<dbReference type="GO" id="GO:0034703">
    <property type="term" value="C:cation channel complex"/>
    <property type="evidence" value="ECO:0000250"/>
    <property type="project" value="FlyBase"/>
</dbReference>
<dbReference type="GO" id="GO:0032590">
    <property type="term" value="C:dendrite membrane"/>
    <property type="evidence" value="ECO:0000250"/>
    <property type="project" value="FlyBase"/>
</dbReference>
<dbReference type="GO" id="GO:0005886">
    <property type="term" value="C:plasma membrane"/>
    <property type="evidence" value="ECO:0000250"/>
    <property type="project" value="FlyBase"/>
</dbReference>
<dbReference type="GO" id="GO:0170020">
    <property type="term" value="F:ionotropic olfactory receptor activity"/>
    <property type="evidence" value="ECO:0000250"/>
    <property type="project" value="FlyBase"/>
</dbReference>
<dbReference type="GO" id="GO:0005549">
    <property type="term" value="F:odorant binding"/>
    <property type="evidence" value="ECO:0000250"/>
    <property type="project" value="FlyBase"/>
</dbReference>
<dbReference type="GO" id="GO:0004984">
    <property type="term" value="F:olfactory receptor activity"/>
    <property type="evidence" value="ECO:0000318"/>
    <property type="project" value="GO_Central"/>
</dbReference>
<dbReference type="GO" id="GO:0050911">
    <property type="term" value="P:detection of chemical stimulus involved in sensory perception of smell"/>
    <property type="evidence" value="ECO:0000250"/>
    <property type="project" value="FlyBase"/>
</dbReference>
<dbReference type="GO" id="GO:0007165">
    <property type="term" value="P:signal transduction"/>
    <property type="evidence" value="ECO:0007669"/>
    <property type="project" value="UniProtKB-KW"/>
</dbReference>
<dbReference type="InterPro" id="IPR004117">
    <property type="entry name" value="7tm6_olfct_rcpt"/>
</dbReference>
<dbReference type="PANTHER" id="PTHR21137">
    <property type="entry name" value="ODORANT RECEPTOR"/>
    <property type="match status" value="1"/>
</dbReference>
<dbReference type="PANTHER" id="PTHR21137:SF44">
    <property type="entry name" value="ODORANT RECEPTOR 13A-RELATED"/>
    <property type="match status" value="1"/>
</dbReference>
<dbReference type="Pfam" id="PF02949">
    <property type="entry name" value="7tm_6"/>
    <property type="match status" value="1"/>
</dbReference>
<keyword id="KW-0025">Alternative splicing</keyword>
<keyword id="KW-1003">Cell membrane</keyword>
<keyword id="KW-0472">Membrane</keyword>
<keyword id="KW-0552">Olfaction</keyword>
<keyword id="KW-0675">Receptor</keyword>
<keyword id="KW-1185">Reference proteome</keyword>
<keyword id="KW-0716">Sensory transduction</keyword>
<keyword id="KW-0807">Transducer</keyword>
<keyword id="KW-0812">Transmembrane</keyword>
<keyword id="KW-1133">Transmembrane helix</keyword>
<evidence type="ECO:0000250" key="1"/>
<evidence type="ECO:0000255" key="2"/>
<evidence type="ECO:0000269" key="3">
    <source>
    </source>
</evidence>
<evidence type="ECO:0000305" key="4"/>
<sequence length="393" mass="46096">MQLEDFMRYPDLVCQAAQLPRYTWNGRRSLEVKRNLAKRIIFWLGAVNLVYHNIGCVMYGYFGDGRTKDPIAYLAELASVASMLGFTIVGTLNLWKMLSLKTHFENLLNEFEELFQLIKHRAYRIHHYQEKYTRHIRNTFIFHTSAVVYYNSLPILLMIREHFSNSQQLGYRIQSNTWYPWQVQGSIPGFFAAVACQIFSCQTNMCVNMFIQFLINFFGIQLEIHFDGLARQLETIDARNPHAKDQLKYLIVYHTKLLNLADRVNRSFNFTFLISLSVSMISNCFLAFSMTMFDFGTSLKHLLGLLLFITYNFSMCRSGTHLILTSGKVLPAAFYNNWYEGDLVYRRMLLILMMRATKPYMWKTYKLAPVSITTYMATLKFSYQMFTCVRSLK</sequence>
<proteinExistence type="evidence at transcript level"/>
<feature type="chain" id="PRO_0000174267" description="Putative odorant receptor 69a, isoform B">
    <location>
        <begin position="1"/>
        <end position="393"/>
    </location>
</feature>
<feature type="topological domain" description="Cytoplasmic" evidence="2">
    <location>
        <begin position="1"/>
        <end position="39"/>
    </location>
</feature>
<feature type="transmembrane region" description="Helical; Name=1" evidence="2">
    <location>
        <begin position="40"/>
        <end position="60"/>
    </location>
</feature>
<feature type="topological domain" description="Extracellular" evidence="2">
    <location>
        <begin position="61"/>
        <end position="69"/>
    </location>
</feature>
<feature type="transmembrane region" description="Helical; Name=2" evidence="2">
    <location>
        <begin position="70"/>
        <end position="90"/>
    </location>
</feature>
<feature type="topological domain" description="Cytoplasmic" evidence="2">
    <location>
        <begin position="91"/>
        <end position="138"/>
    </location>
</feature>
<feature type="transmembrane region" description="Helical; Name=3" evidence="2">
    <location>
        <begin position="139"/>
        <end position="159"/>
    </location>
</feature>
<feature type="topological domain" description="Extracellular" evidence="2">
    <location>
        <begin position="160"/>
        <end position="208"/>
    </location>
</feature>
<feature type="transmembrane region" description="Helical; Name=4" evidence="2">
    <location>
        <begin position="209"/>
        <end position="229"/>
    </location>
</feature>
<feature type="topological domain" description="Cytoplasmic" evidence="2">
    <location>
        <begin position="230"/>
        <end position="269"/>
    </location>
</feature>
<feature type="transmembrane region" description="Helical; Name=5" evidence="2">
    <location>
        <begin position="270"/>
        <end position="290"/>
    </location>
</feature>
<feature type="topological domain" description="Extracellular" evidence="2">
    <location>
        <begin position="291"/>
        <end position="305"/>
    </location>
</feature>
<feature type="transmembrane region" description="Helical; Name=6" evidence="2">
    <location>
        <begin position="306"/>
        <end position="326"/>
    </location>
</feature>
<feature type="topological domain" description="Cytoplasmic" evidence="2">
    <location>
        <begin position="327"/>
        <end position="365"/>
    </location>
</feature>
<feature type="transmembrane region" description="Helical; Name=7" evidence="2">
    <location>
        <begin position="366"/>
        <end position="386"/>
    </location>
</feature>
<feature type="topological domain" description="Extracellular" evidence="2">
    <location>
        <begin position="387"/>
        <end position="393"/>
    </location>
</feature>
<reference key="1">
    <citation type="journal article" date="2000" name="Science">
        <title>The genome sequence of Drosophila melanogaster.</title>
        <authorList>
            <person name="Adams M.D."/>
            <person name="Celniker S.E."/>
            <person name="Holt R.A."/>
            <person name="Evans C.A."/>
            <person name="Gocayne J.D."/>
            <person name="Amanatides P.G."/>
            <person name="Scherer S.E."/>
            <person name="Li P.W."/>
            <person name="Hoskins R.A."/>
            <person name="Galle R.F."/>
            <person name="George R.A."/>
            <person name="Lewis S.E."/>
            <person name="Richards S."/>
            <person name="Ashburner M."/>
            <person name="Henderson S.N."/>
            <person name="Sutton G.G."/>
            <person name="Wortman J.R."/>
            <person name="Yandell M.D."/>
            <person name="Zhang Q."/>
            <person name="Chen L.X."/>
            <person name="Brandon R.C."/>
            <person name="Rogers Y.-H.C."/>
            <person name="Blazej R.G."/>
            <person name="Champe M."/>
            <person name="Pfeiffer B.D."/>
            <person name="Wan K.H."/>
            <person name="Doyle C."/>
            <person name="Baxter E.G."/>
            <person name="Helt G."/>
            <person name="Nelson C.R."/>
            <person name="Miklos G.L.G."/>
            <person name="Abril J.F."/>
            <person name="Agbayani A."/>
            <person name="An H.-J."/>
            <person name="Andrews-Pfannkoch C."/>
            <person name="Baldwin D."/>
            <person name="Ballew R.M."/>
            <person name="Basu A."/>
            <person name="Baxendale J."/>
            <person name="Bayraktaroglu L."/>
            <person name="Beasley E.M."/>
            <person name="Beeson K.Y."/>
            <person name="Benos P.V."/>
            <person name="Berman B.P."/>
            <person name="Bhandari D."/>
            <person name="Bolshakov S."/>
            <person name="Borkova D."/>
            <person name="Botchan M.R."/>
            <person name="Bouck J."/>
            <person name="Brokstein P."/>
            <person name="Brottier P."/>
            <person name="Burtis K.C."/>
            <person name="Busam D.A."/>
            <person name="Butler H."/>
            <person name="Cadieu E."/>
            <person name="Center A."/>
            <person name="Chandra I."/>
            <person name="Cherry J.M."/>
            <person name="Cawley S."/>
            <person name="Dahlke C."/>
            <person name="Davenport L.B."/>
            <person name="Davies P."/>
            <person name="de Pablos B."/>
            <person name="Delcher A."/>
            <person name="Deng Z."/>
            <person name="Mays A.D."/>
            <person name="Dew I."/>
            <person name="Dietz S.M."/>
            <person name="Dodson K."/>
            <person name="Doup L.E."/>
            <person name="Downes M."/>
            <person name="Dugan-Rocha S."/>
            <person name="Dunkov B.C."/>
            <person name="Dunn P."/>
            <person name="Durbin K.J."/>
            <person name="Evangelista C.C."/>
            <person name="Ferraz C."/>
            <person name="Ferriera S."/>
            <person name="Fleischmann W."/>
            <person name="Fosler C."/>
            <person name="Gabrielian A.E."/>
            <person name="Garg N.S."/>
            <person name="Gelbart W.M."/>
            <person name="Glasser K."/>
            <person name="Glodek A."/>
            <person name="Gong F."/>
            <person name="Gorrell J.H."/>
            <person name="Gu Z."/>
            <person name="Guan P."/>
            <person name="Harris M."/>
            <person name="Harris N.L."/>
            <person name="Harvey D.A."/>
            <person name="Heiman T.J."/>
            <person name="Hernandez J.R."/>
            <person name="Houck J."/>
            <person name="Hostin D."/>
            <person name="Houston K.A."/>
            <person name="Howland T.J."/>
            <person name="Wei M.-H."/>
            <person name="Ibegwam C."/>
            <person name="Jalali M."/>
            <person name="Kalush F."/>
            <person name="Karpen G.H."/>
            <person name="Ke Z."/>
            <person name="Kennison J.A."/>
            <person name="Ketchum K.A."/>
            <person name="Kimmel B.E."/>
            <person name="Kodira C.D."/>
            <person name="Kraft C.L."/>
            <person name="Kravitz S."/>
            <person name="Kulp D."/>
            <person name="Lai Z."/>
            <person name="Lasko P."/>
            <person name="Lei Y."/>
            <person name="Levitsky A.A."/>
            <person name="Li J.H."/>
            <person name="Li Z."/>
            <person name="Liang Y."/>
            <person name="Lin X."/>
            <person name="Liu X."/>
            <person name="Mattei B."/>
            <person name="McIntosh T.C."/>
            <person name="McLeod M.P."/>
            <person name="McPherson D."/>
            <person name="Merkulov G."/>
            <person name="Milshina N.V."/>
            <person name="Mobarry C."/>
            <person name="Morris J."/>
            <person name="Moshrefi A."/>
            <person name="Mount S.M."/>
            <person name="Moy M."/>
            <person name="Murphy B."/>
            <person name="Murphy L."/>
            <person name="Muzny D.M."/>
            <person name="Nelson D.L."/>
            <person name="Nelson D.R."/>
            <person name="Nelson K.A."/>
            <person name="Nixon K."/>
            <person name="Nusskern D.R."/>
            <person name="Pacleb J.M."/>
            <person name="Palazzolo M."/>
            <person name="Pittman G.S."/>
            <person name="Pan S."/>
            <person name="Pollard J."/>
            <person name="Puri V."/>
            <person name="Reese M.G."/>
            <person name="Reinert K."/>
            <person name="Remington K."/>
            <person name="Saunders R.D.C."/>
            <person name="Scheeler F."/>
            <person name="Shen H."/>
            <person name="Shue B.C."/>
            <person name="Siden-Kiamos I."/>
            <person name="Simpson M."/>
            <person name="Skupski M.P."/>
            <person name="Smith T.J."/>
            <person name="Spier E."/>
            <person name="Spradling A.C."/>
            <person name="Stapleton M."/>
            <person name="Strong R."/>
            <person name="Sun E."/>
            <person name="Svirskas R."/>
            <person name="Tector C."/>
            <person name="Turner R."/>
            <person name="Venter E."/>
            <person name="Wang A.H."/>
            <person name="Wang X."/>
            <person name="Wang Z.-Y."/>
            <person name="Wassarman D.A."/>
            <person name="Weinstock G.M."/>
            <person name="Weissenbach J."/>
            <person name="Williams S.M."/>
            <person name="Woodage T."/>
            <person name="Worley K.C."/>
            <person name="Wu D."/>
            <person name="Yang S."/>
            <person name="Yao Q.A."/>
            <person name="Ye J."/>
            <person name="Yeh R.-F."/>
            <person name="Zaveri J.S."/>
            <person name="Zhan M."/>
            <person name="Zhang G."/>
            <person name="Zhao Q."/>
            <person name="Zheng L."/>
            <person name="Zheng X.H."/>
            <person name="Zhong F.N."/>
            <person name="Zhong W."/>
            <person name="Zhou X."/>
            <person name="Zhu S.C."/>
            <person name="Zhu X."/>
            <person name="Smith H.O."/>
            <person name="Gibbs R.A."/>
            <person name="Myers E.W."/>
            <person name="Rubin G.M."/>
            <person name="Venter J.C."/>
        </authorList>
    </citation>
    <scope>NUCLEOTIDE SEQUENCE [LARGE SCALE GENOMIC DNA]</scope>
    <source>
        <strain>Berkeley</strain>
    </source>
</reference>
<reference key="2">
    <citation type="journal article" date="2002" name="Genome Biol.">
        <title>Annotation of the Drosophila melanogaster euchromatic genome: a systematic review.</title>
        <authorList>
            <person name="Misra S."/>
            <person name="Crosby M.A."/>
            <person name="Mungall C.J."/>
            <person name="Matthews B.B."/>
            <person name="Campbell K.S."/>
            <person name="Hradecky P."/>
            <person name="Huang Y."/>
            <person name="Kaminker J.S."/>
            <person name="Millburn G.H."/>
            <person name="Prochnik S.E."/>
            <person name="Smith C.D."/>
            <person name="Tupy J.L."/>
            <person name="Whitfield E.J."/>
            <person name="Bayraktaroglu L."/>
            <person name="Berman B.P."/>
            <person name="Bettencourt B.R."/>
            <person name="Celniker S.E."/>
            <person name="de Grey A.D.N.J."/>
            <person name="Drysdale R.A."/>
            <person name="Harris N.L."/>
            <person name="Richter J."/>
            <person name="Russo S."/>
            <person name="Schroeder A.J."/>
            <person name="Shu S.Q."/>
            <person name="Stapleton M."/>
            <person name="Yamada C."/>
            <person name="Ashburner M."/>
            <person name="Gelbart W.M."/>
            <person name="Rubin G.M."/>
            <person name="Lewis S.E."/>
        </authorList>
    </citation>
    <scope>GENOME REANNOTATION</scope>
    <scope>ALTERNATIVE SPLICING</scope>
    <source>
        <strain>Berkeley</strain>
    </source>
</reference>
<reference key="3">
    <citation type="journal article" date="2000" name="Cell">
        <title>An olfactory sensory map in the fly brain.</title>
        <authorList>
            <person name="Vosshall L.B."/>
            <person name="Wong A.M."/>
            <person name="Axel R."/>
        </authorList>
    </citation>
    <scope>TISSUE SPECIFICITY</scope>
</reference>
<reference key="4">
    <citation type="journal article" date="2003" name="Proc. Natl. Acad. Sci. U.S.A.">
        <title>Molecular evolution of the insect chemoreceptor gene superfamily in Drosophila melanogaster.</title>
        <authorList>
            <person name="Robertson H.M."/>
            <person name="Warr C.G."/>
            <person name="Carlson J.R."/>
        </authorList>
    </citation>
    <scope>IDENTIFICATION OF ALTERNATIVE SPLICING</scope>
</reference>